<comment type="function">
    <text evidence="1">Protein S19 forms a complex with S13 that binds strongly to the 16S ribosomal RNA.</text>
</comment>
<comment type="similarity">
    <text evidence="1">Belongs to the universal ribosomal protein uS19 family.</text>
</comment>
<sequence length="98" mass="10783">MPRSLKKGPFIESKLEKRIAALNSKDEKKVVKTWSRSSMIAPEFVGHTIAVHNGKSHIPVYVSENMVGHKLGEFAPTRTYRGHAGGKSEKGGSAPRKK</sequence>
<accession>B3EP57</accession>
<reference key="1">
    <citation type="submission" date="2008-06" db="EMBL/GenBank/DDBJ databases">
        <title>Complete sequence of Chlorobium phaeobacteroides BS1.</title>
        <authorList>
            <consortium name="US DOE Joint Genome Institute"/>
            <person name="Lucas S."/>
            <person name="Copeland A."/>
            <person name="Lapidus A."/>
            <person name="Glavina del Rio T."/>
            <person name="Dalin E."/>
            <person name="Tice H."/>
            <person name="Bruce D."/>
            <person name="Goodwin L."/>
            <person name="Pitluck S."/>
            <person name="Schmutz J."/>
            <person name="Larimer F."/>
            <person name="Land M."/>
            <person name="Hauser L."/>
            <person name="Kyrpides N."/>
            <person name="Ovchinnikova G."/>
            <person name="Li T."/>
            <person name="Liu Z."/>
            <person name="Zhao F."/>
            <person name="Overmann J."/>
            <person name="Bryant D.A."/>
            <person name="Richardson P."/>
        </authorList>
    </citation>
    <scope>NUCLEOTIDE SEQUENCE [LARGE SCALE GENOMIC DNA]</scope>
    <source>
        <strain>BS1</strain>
    </source>
</reference>
<keyword id="KW-0687">Ribonucleoprotein</keyword>
<keyword id="KW-0689">Ribosomal protein</keyword>
<keyword id="KW-0694">RNA-binding</keyword>
<keyword id="KW-0699">rRNA-binding</keyword>
<gene>
    <name evidence="1" type="primary">rpsS</name>
    <name type="ordered locus">Cphamn1_2292</name>
</gene>
<organism>
    <name type="scientific">Chlorobium phaeobacteroides (strain BS1)</name>
    <dbReference type="NCBI Taxonomy" id="331678"/>
    <lineage>
        <taxon>Bacteria</taxon>
        <taxon>Pseudomonadati</taxon>
        <taxon>Chlorobiota</taxon>
        <taxon>Chlorobiia</taxon>
        <taxon>Chlorobiales</taxon>
        <taxon>Chlorobiaceae</taxon>
        <taxon>Chlorobium/Pelodictyon group</taxon>
        <taxon>Chlorobium</taxon>
    </lineage>
</organism>
<proteinExistence type="inferred from homology"/>
<feature type="chain" id="PRO_1000127947" description="Small ribosomal subunit protein uS19">
    <location>
        <begin position="1"/>
        <end position="98"/>
    </location>
</feature>
<feature type="region of interest" description="Disordered" evidence="2">
    <location>
        <begin position="77"/>
        <end position="98"/>
    </location>
</feature>
<protein>
    <recommendedName>
        <fullName evidence="1">Small ribosomal subunit protein uS19</fullName>
    </recommendedName>
    <alternativeName>
        <fullName evidence="3">30S ribosomal protein S19</fullName>
    </alternativeName>
</protein>
<evidence type="ECO:0000255" key="1">
    <source>
        <dbReference type="HAMAP-Rule" id="MF_00531"/>
    </source>
</evidence>
<evidence type="ECO:0000256" key="2">
    <source>
        <dbReference type="SAM" id="MobiDB-lite"/>
    </source>
</evidence>
<evidence type="ECO:0000305" key="3"/>
<dbReference type="EMBL" id="CP001101">
    <property type="protein sequence ID" value="ACE05196.1"/>
    <property type="molecule type" value="Genomic_DNA"/>
</dbReference>
<dbReference type="SMR" id="B3EP57"/>
<dbReference type="STRING" id="331678.Cphamn1_2292"/>
<dbReference type="KEGG" id="cpb:Cphamn1_2292"/>
<dbReference type="eggNOG" id="COG0185">
    <property type="taxonomic scope" value="Bacteria"/>
</dbReference>
<dbReference type="HOGENOM" id="CLU_144911_0_1_10"/>
<dbReference type="OrthoDB" id="9797833at2"/>
<dbReference type="GO" id="GO:0005737">
    <property type="term" value="C:cytoplasm"/>
    <property type="evidence" value="ECO:0007669"/>
    <property type="project" value="UniProtKB-ARBA"/>
</dbReference>
<dbReference type="GO" id="GO:0015935">
    <property type="term" value="C:small ribosomal subunit"/>
    <property type="evidence" value="ECO:0007669"/>
    <property type="project" value="InterPro"/>
</dbReference>
<dbReference type="GO" id="GO:0019843">
    <property type="term" value="F:rRNA binding"/>
    <property type="evidence" value="ECO:0007669"/>
    <property type="project" value="UniProtKB-UniRule"/>
</dbReference>
<dbReference type="GO" id="GO:0003735">
    <property type="term" value="F:structural constituent of ribosome"/>
    <property type="evidence" value="ECO:0007669"/>
    <property type="project" value="InterPro"/>
</dbReference>
<dbReference type="GO" id="GO:0000028">
    <property type="term" value="P:ribosomal small subunit assembly"/>
    <property type="evidence" value="ECO:0007669"/>
    <property type="project" value="TreeGrafter"/>
</dbReference>
<dbReference type="GO" id="GO:0006412">
    <property type="term" value="P:translation"/>
    <property type="evidence" value="ECO:0007669"/>
    <property type="project" value="UniProtKB-UniRule"/>
</dbReference>
<dbReference type="FunFam" id="3.30.860.10:FF:000001">
    <property type="entry name" value="30S ribosomal protein S19"/>
    <property type="match status" value="1"/>
</dbReference>
<dbReference type="Gene3D" id="3.30.860.10">
    <property type="entry name" value="30s Ribosomal Protein S19, Chain A"/>
    <property type="match status" value="1"/>
</dbReference>
<dbReference type="HAMAP" id="MF_00531">
    <property type="entry name" value="Ribosomal_uS19"/>
    <property type="match status" value="1"/>
</dbReference>
<dbReference type="InterPro" id="IPR002222">
    <property type="entry name" value="Ribosomal_uS19"/>
</dbReference>
<dbReference type="InterPro" id="IPR005732">
    <property type="entry name" value="Ribosomal_uS19_bac-type"/>
</dbReference>
<dbReference type="InterPro" id="IPR020934">
    <property type="entry name" value="Ribosomal_uS19_CS"/>
</dbReference>
<dbReference type="InterPro" id="IPR023575">
    <property type="entry name" value="Ribosomal_uS19_SF"/>
</dbReference>
<dbReference type="NCBIfam" id="TIGR01050">
    <property type="entry name" value="rpsS_bact"/>
    <property type="match status" value="1"/>
</dbReference>
<dbReference type="PANTHER" id="PTHR11880">
    <property type="entry name" value="RIBOSOMAL PROTEIN S19P FAMILY MEMBER"/>
    <property type="match status" value="1"/>
</dbReference>
<dbReference type="PANTHER" id="PTHR11880:SF8">
    <property type="entry name" value="SMALL RIBOSOMAL SUBUNIT PROTEIN US19M"/>
    <property type="match status" value="1"/>
</dbReference>
<dbReference type="Pfam" id="PF00203">
    <property type="entry name" value="Ribosomal_S19"/>
    <property type="match status" value="1"/>
</dbReference>
<dbReference type="PIRSF" id="PIRSF002144">
    <property type="entry name" value="Ribosomal_S19"/>
    <property type="match status" value="1"/>
</dbReference>
<dbReference type="PRINTS" id="PR00975">
    <property type="entry name" value="RIBOSOMALS19"/>
</dbReference>
<dbReference type="SUPFAM" id="SSF54570">
    <property type="entry name" value="Ribosomal protein S19"/>
    <property type="match status" value="1"/>
</dbReference>
<dbReference type="PROSITE" id="PS00323">
    <property type="entry name" value="RIBOSOMAL_S19"/>
    <property type="match status" value="1"/>
</dbReference>
<name>RS19_CHLPB</name>